<proteinExistence type="inferred from homology"/>
<evidence type="ECO:0000255" key="1">
    <source>
        <dbReference type="HAMAP-Rule" id="MF_00081"/>
    </source>
</evidence>
<gene>
    <name evidence="1" type="primary">hrcA</name>
    <name type="ordered locus">SPT_0548</name>
</gene>
<comment type="function">
    <text evidence="1">Negative regulator of class I heat shock genes (grpE-dnaK-dnaJ and groELS operons). Prevents heat-shock induction of these operons.</text>
</comment>
<comment type="similarity">
    <text evidence="1">Belongs to the HrcA family.</text>
</comment>
<name>HRCA_STRZT</name>
<reference key="1">
    <citation type="journal article" date="2010" name="Genome Biol.">
        <title>Structure and dynamics of the pan-genome of Streptococcus pneumoniae and closely related species.</title>
        <authorList>
            <person name="Donati C."/>
            <person name="Hiller N.L."/>
            <person name="Tettelin H."/>
            <person name="Muzzi A."/>
            <person name="Croucher N.J."/>
            <person name="Angiuoli S.V."/>
            <person name="Oggioni M."/>
            <person name="Dunning Hotopp J.C."/>
            <person name="Hu F.Z."/>
            <person name="Riley D.R."/>
            <person name="Covacci A."/>
            <person name="Mitchell T.J."/>
            <person name="Bentley S.D."/>
            <person name="Kilian M."/>
            <person name="Ehrlich G.D."/>
            <person name="Rappuoli R."/>
            <person name="Moxon E.R."/>
            <person name="Masignani V."/>
        </authorList>
    </citation>
    <scope>NUCLEOTIDE SEQUENCE [LARGE SCALE GENOMIC DNA]</scope>
    <source>
        <strain>Taiwan19F-14</strain>
    </source>
</reference>
<organism>
    <name type="scientific">Streptococcus pneumoniae (strain Taiwan19F-14)</name>
    <dbReference type="NCBI Taxonomy" id="487213"/>
    <lineage>
        <taxon>Bacteria</taxon>
        <taxon>Bacillati</taxon>
        <taxon>Bacillota</taxon>
        <taxon>Bacilli</taxon>
        <taxon>Lactobacillales</taxon>
        <taxon>Streptococcaceae</taxon>
        <taxon>Streptococcus</taxon>
    </lineage>
</organism>
<sequence length="344" mass="39391">MVTERQQDILNLIIDIFTKTHEPVGSKALQESINSSSATIRNDMAELEKQGLLEKAHTSSGRMPSVAGFQYYVKHSLDFDRLAENEVYEIVKAFDQEFFKLEDILQEAANLLTDLSGCTVVALDVEPSRQRLTAFDIVVLGQHTALAVFTLDESRTVTSQFLIPRNFLQEDLLKLKSIIQERFLGHTVLDIHYKIRTEIPQIIQRYFTTTDNVIDLFEHIFKEMFNENIVMAGKVHLLNFANLAAYQFFDQPQKVALEIREGLREEQMQNVRVADGQESCLADLAVISSKFLIPYRGVGILAIIGPVNLDYQQLINQVNVVNRVLTMKLTDFYRYLSSNHYEVH</sequence>
<feature type="chain" id="PRO_1000118322" description="Heat-inducible transcription repressor HrcA">
    <location>
        <begin position="1"/>
        <end position="344"/>
    </location>
</feature>
<dbReference type="EMBL" id="CP000921">
    <property type="protein sequence ID" value="ACO22867.1"/>
    <property type="molecule type" value="Genomic_DNA"/>
</dbReference>
<dbReference type="RefSeq" id="WP_000255769.1">
    <property type="nucleotide sequence ID" value="NC_012469.1"/>
</dbReference>
<dbReference type="SMR" id="C1CQ16"/>
<dbReference type="KEGG" id="snt:SPT_0548"/>
<dbReference type="HOGENOM" id="CLU_050019_1_0_9"/>
<dbReference type="GO" id="GO:0003677">
    <property type="term" value="F:DNA binding"/>
    <property type="evidence" value="ECO:0007669"/>
    <property type="project" value="InterPro"/>
</dbReference>
<dbReference type="GO" id="GO:0045892">
    <property type="term" value="P:negative regulation of DNA-templated transcription"/>
    <property type="evidence" value="ECO:0007669"/>
    <property type="project" value="UniProtKB-UniRule"/>
</dbReference>
<dbReference type="Gene3D" id="3.30.450.40">
    <property type="match status" value="1"/>
</dbReference>
<dbReference type="Gene3D" id="3.30.390.60">
    <property type="entry name" value="Heat-inducible transcription repressor hrca homolog, domain 3"/>
    <property type="match status" value="1"/>
</dbReference>
<dbReference type="Gene3D" id="1.10.10.10">
    <property type="entry name" value="Winged helix-like DNA-binding domain superfamily/Winged helix DNA-binding domain"/>
    <property type="match status" value="1"/>
</dbReference>
<dbReference type="HAMAP" id="MF_00081">
    <property type="entry name" value="HrcA"/>
    <property type="match status" value="1"/>
</dbReference>
<dbReference type="InterPro" id="IPR029016">
    <property type="entry name" value="GAF-like_dom_sf"/>
</dbReference>
<dbReference type="InterPro" id="IPR002571">
    <property type="entry name" value="HrcA"/>
</dbReference>
<dbReference type="InterPro" id="IPR021153">
    <property type="entry name" value="HrcA_C"/>
</dbReference>
<dbReference type="InterPro" id="IPR036388">
    <property type="entry name" value="WH-like_DNA-bd_sf"/>
</dbReference>
<dbReference type="InterPro" id="IPR036390">
    <property type="entry name" value="WH_DNA-bd_sf"/>
</dbReference>
<dbReference type="InterPro" id="IPR005104">
    <property type="entry name" value="WHTH_HrcA_DNA-bd"/>
</dbReference>
<dbReference type="InterPro" id="IPR023120">
    <property type="entry name" value="WHTH_transcript_rep_HrcA_IDD"/>
</dbReference>
<dbReference type="NCBIfam" id="TIGR00331">
    <property type="entry name" value="hrcA"/>
    <property type="match status" value="1"/>
</dbReference>
<dbReference type="PANTHER" id="PTHR34824">
    <property type="entry name" value="HEAT-INDUCIBLE TRANSCRIPTION REPRESSOR HRCA"/>
    <property type="match status" value="1"/>
</dbReference>
<dbReference type="PANTHER" id="PTHR34824:SF1">
    <property type="entry name" value="HEAT-INDUCIBLE TRANSCRIPTION REPRESSOR HRCA"/>
    <property type="match status" value="1"/>
</dbReference>
<dbReference type="Pfam" id="PF01628">
    <property type="entry name" value="HrcA"/>
    <property type="match status" value="1"/>
</dbReference>
<dbReference type="Pfam" id="PF03444">
    <property type="entry name" value="HrcA_DNA-bdg"/>
    <property type="match status" value="1"/>
</dbReference>
<dbReference type="PIRSF" id="PIRSF005485">
    <property type="entry name" value="HrcA"/>
    <property type="match status" value="1"/>
</dbReference>
<dbReference type="SUPFAM" id="SSF55781">
    <property type="entry name" value="GAF domain-like"/>
    <property type="match status" value="1"/>
</dbReference>
<dbReference type="SUPFAM" id="SSF46785">
    <property type="entry name" value="Winged helix' DNA-binding domain"/>
    <property type="match status" value="1"/>
</dbReference>
<keyword id="KW-0678">Repressor</keyword>
<keyword id="KW-0346">Stress response</keyword>
<keyword id="KW-0804">Transcription</keyword>
<keyword id="KW-0805">Transcription regulation</keyword>
<protein>
    <recommendedName>
        <fullName evidence="1">Heat-inducible transcription repressor HrcA</fullName>
    </recommendedName>
</protein>
<accession>C1CQ16</accession>